<comment type="function">
    <text evidence="1">Catalyzes the anti-1,4-elimination of the C-3 phosphate and the C-6 proR hydrogen from 5-enolpyruvylshikimate-3-phosphate (EPSP) to yield chorismate, which is the branch point compound that serves as the starting substrate for the three terminal pathways of aromatic amino acid biosynthesis. This reaction introduces a second double bond into the aromatic ring system.</text>
</comment>
<comment type="catalytic activity">
    <reaction evidence="1">
        <text>5-O-(1-carboxyvinyl)-3-phosphoshikimate = chorismate + phosphate</text>
        <dbReference type="Rhea" id="RHEA:21020"/>
        <dbReference type="ChEBI" id="CHEBI:29748"/>
        <dbReference type="ChEBI" id="CHEBI:43474"/>
        <dbReference type="ChEBI" id="CHEBI:57701"/>
        <dbReference type="EC" id="4.2.3.5"/>
    </reaction>
</comment>
<comment type="cofactor">
    <cofactor evidence="1">
        <name>FMNH2</name>
        <dbReference type="ChEBI" id="CHEBI:57618"/>
    </cofactor>
    <text evidence="1">Reduced FMN (FMNH(2)).</text>
</comment>
<comment type="pathway">
    <text evidence="1">Metabolic intermediate biosynthesis; chorismate biosynthesis; chorismate from D-erythrose 4-phosphate and phosphoenolpyruvate: step 7/7.</text>
</comment>
<comment type="subunit">
    <text evidence="1">Homotetramer.</text>
</comment>
<comment type="similarity">
    <text evidence="1">Belongs to the chorismate synthase family.</text>
</comment>
<protein>
    <recommendedName>
        <fullName evidence="1">Chorismate synthase</fullName>
        <shortName evidence="1">CS</shortName>
        <ecNumber evidence="1">4.2.3.5</ecNumber>
    </recommendedName>
    <alternativeName>
        <fullName evidence="1">5-enolpyruvylshikimate-3-phosphate phospholyase</fullName>
    </alternativeName>
</protein>
<evidence type="ECO:0000255" key="1">
    <source>
        <dbReference type="HAMAP-Rule" id="MF_00300"/>
    </source>
</evidence>
<reference key="1">
    <citation type="journal article" date="1999" name="Nature">
        <title>Genomic sequence comparison of two unrelated isolates of the human gastric pathogen Helicobacter pylori.</title>
        <authorList>
            <person name="Alm R.A."/>
            <person name="Ling L.-S.L."/>
            <person name="Moir D.T."/>
            <person name="King B.L."/>
            <person name="Brown E.D."/>
            <person name="Doig P.C."/>
            <person name="Smith D.R."/>
            <person name="Noonan B."/>
            <person name="Guild B.C."/>
            <person name="deJonge B.L."/>
            <person name="Carmel G."/>
            <person name="Tummino P.J."/>
            <person name="Caruso A."/>
            <person name="Uria-Nickelsen M."/>
            <person name="Mills D.M."/>
            <person name="Ives C."/>
            <person name="Gibson R."/>
            <person name="Merberg D."/>
            <person name="Mills S.D."/>
            <person name="Jiang Q."/>
            <person name="Taylor D.E."/>
            <person name="Vovis G.F."/>
            <person name="Trust T.J."/>
        </authorList>
    </citation>
    <scope>NUCLEOTIDE SEQUENCE [LARGE SCALE GENOMIC DNA]</scope>
    <source>
        <strain>J99 / ATCC 700824</strain>
    </source>
</reference>
<dbReference type="EC" id="4.2.3.5" evidence="1"/>
<dbReference type="EMBL" id="AE001439">
    <property type="protein sequence ID" value="AAD06189.1"/>
    <property type="molecule type" value="Genomic_DNA"/>
</dbReference>
<dbReference type="PIR" id="F71911">
    <property type="entry name" value="F71911"/>
</dbReference>
<dbReference type="RefSeq" id="WP_001093986.1">
    <property type="nucleotide sequence ID" value="NC_000921.1"/>
</dbReference>
<dbReference type="SMR" id="Q9ZLH1"/>
<dbReference type="KEGG" id="hpj:jhp_0608"/>
<dbReference type="PATRIC" id="fig|85963.30.peg.377"/>
<dbReference type="eggNOG" id="COG0082">
    <property type="taxonomic scope" value="Bacteria"/>
</dbReference>
<dbReference type="UniPathway" id="UPA00053">
    <property type="reaction ID" value="UER00090"/>
</dbReference>
<dbReference type="Proteomes" id="UP000000804">
    <property type="component" value="Chromosome"/>
</dbReference>
<dbReference type="GO" id="GO:0005829">
    <property type="term" value="C:cytosol"/>
    <property type="evidence" value="ECO:0007669"/>
    <property type="project" value="TreeGrafter"/>
</dbReference>
<dbReference type="GO" id="GO:0004107">
    <property type="term" value="F:chorismate synthase activity"/>
    <property type="evidence" value="ECO:0007669"/>
    <property type="project" value="UniProtKB-UniRule"/>
</dbReference>
<dbReference type="GO" id="GO:0010181">
    <property type="term" value="F:FMN binding"/>
    <property type="evidence" value="ECO:0007669"/>
    <property type="project" value="TreeGrafter"/>
</dbReference>
<dbReference type="GO" id="GO:0008652">
    <property type="term" value="P:amino acid biosynthetic process"/>
    <property type="evidence" value="ECO:0007669"/>
    <property type="project" value="UniProtKB-KW"/>
</dbReference>
<dbReference type="GO" id="GO:0009073">
    <property type="term" value="P:aromatic amino acid family biosynthetic process"/>
    <property type="evidence" value="ECO:0007669"/>
    <property type="project" value="UniProtKB-KW"/>
</dbReference>
<dbReference type="GO" id="GO:0009423">
    <property type="term" value="P:chorismate biosynthetic process"/>
    <property type="evidence" value="ECO:0007669"/>
    <property type="project" value="UniProtKB-UniRule"/>
</dbReference>
<dbReference type="CDD" id="cd07304">
    <property type="entry name" value="Chorismate_synthase"/>
    <property type="match status" value="1"/>
</dbReference>
<dbReference type="FunFam" id="3.60.150.10:FF:000011">
    <property type="entry name" value="Chorismate synthase"/>
    <property type="match status" value="1"/>
</dbReference>
<dbReference type="Gene3D" id="3.60.150.10">
    <property type="entry name" value="Chorismate synthase AroC"/>
    <property type="match status" value="1"/>
</dbReference>
<dbReference type="HAMAP" id="MF_00300">
    <property type="entry name" value="Chorismate_synth"/>
    <property type="match status" value="1"/>
</dbReference>
<dbReference type="InterPro" id="IPR000453">
    <property type="entry name" value="Chorismate_synth"/>
</dbReference>
<dbReference type="InterPro" id="IPR035904">
    <property type="entry name" value="Chorismate_synth_AroC_sf"/>
</dbReference>
<dbReference type="InterPro" id="IPR020541">
    <property type="entry name" value="Chorismate_synthase_CS"/>
</dbReference>
<dbReference type="NCBIfam" id="TIGR00033">
    <property type="entry name" value="aroC"/>
    <property type="match status" value="1"/>
</dbReference>
<dbReference type="NCBIfam" id="NF003793">
    <property type="entry name" value="PRK05382.1"/>
    <property type="match status" value="1"/>
</dbReference>
<dbReference type="PANTHER" id="PTHR21085">
    <property type="entry name" value="CHORISMATE SYNTHASE"/>
    <property type="match status" value="1"/>
</dbReference>
<dbReference type="PANTHER" id="PTHR21085:SF0">
    <property type="entry name" value="CHORISMATE SYNTHASE"/>
    <property type="match status" value="1"/>
</dbReference>
<dbReference type="Pfam" id="PF01264">
    <property type="entry name" value="Chorismate_synt"/>
    <property type="match status" value="1"/>
</dbReference>
<dbReference type="PIRSF" id="PIRSF001456">
    <property type="entry name" value="Chorismate_synth"/>
    <property type="match status" value="1"/>
</dbReference>
<dbReference type="SUPFAM" id="SSF103263">
    <property type="entry name" value="Chorismate synthase, AroC"/>
    <property type="match status" value="1"/>
</dbReference>
<dbReference type="PROSITE" id="PS00787">
    <property type="entry name" value="CHORISMATE_SYNTHASE_1"/>
    <property type="match status" value="1"/>
</dbReference>
<dbReference type="PROSITE" id="PS00788">
    <property type="entry name" value="CHORISMATE_SYNTHASE_2"/>
    <property type="match status" value="1"/>
</dbReference>
<dbReference type="PROSITE" id="PS00789">
    <property type="entry name" value="CHORISMATE_SYNTHASE_3"/>
    <property type="match status" value="1"/>
</dbReference>
<accession>Q9ZLH1</accession>
<feature type="chain" id="PRO_0000140597" description="Chorismate synthase">
    <location>
        <begin position="1"/>
        <end position="365"/>
    </location>
</feature>
<feature type="binding site" evidence="1">
    <location>
        <position position="46"/>
    </location>
    <ligand>
        <name>NADP(+)</name>
        <dbReference type="ChEBI" id="CHEBI:58349"/>
    </ligand>
</feature>
<feature type="binding site" evidence="1">
    <location>
        <begin position="123"/>
        <end position="125"/>
    </location>
    <ligand>
        <name>FMN</name>
        <dbReference type="ChEBI" id="CHEBI:58210"/>
    </ligand>
</feature>
<feature type="binding site" evidence="1">
    <location>
        <begin position="241"/>
        <end position="242"/>
    </location>
    <ligand>
        <name>FMN</name>
        <dbReference type="ChEBI" id="CHEBI:58210"/>
    </ligand>
</feature>
<feature type="binding site" evidence="1">
    <location>
        <position position="281"/>
    </location>
    <ligand>
        <name>FMN</name>
        <dbReference type="ChEBI" id="CHEBI:58210"/>
    </ligand>
</feature>
<feature type="binding site" evidence="1">
    <location>
        <begin position="296"/>
        <end position="300"/>
    </location>
    <ligand>
        <name>FMN</name>
        <dbReference type="ChEBI" id="CHEBI:58210"/>
    </ligand>
</feature>
<feature type="binding site" evidence="1">
    <location>
        <position position="322"/>
    </location>
    <ligand>
        <name>FMN</name>
        <dbReference type="ChEBI" id="CHEBI:58210"/>
    </ligand>
</feature>
<name>AROC_HELPJ</name>
<keyword id="KW-0028">Amino-acid biosynthesis</keyword>
<keyword id="KW-0057">Aromatic amino acid biosynthesis</keyword>
<keyword id="KW-0274">FAD</keyword>
<keyword id="KW-0285">Flavoprotein</keyword>
<keyword id="KW-0288">FMN</keyword>
<keyword id="KW-0456">Lyase</keyword>
<keyword id="KW-0521">NADP</keyword>
<proteinExistence type="inferred from homology"/>
<gene>
    <name evidence="1" type="primary">aroC</name>
    <name type="ordered locus">jhp_0608</name>
</gene>
<organism>
    <name type="scientific">Helicobacter pylori (strain J99 / ATCC 700824)</name>
    <name type="common">Campylobacter pylori J99</name>
    <dbReference type="NCBI Taxonomy" id="85963"/>
    <lineage>
        <taxon>Bacteria</taxon>
        <taxon>Pseudomonadati</taxon>
        <taxon>Campylobacterota</taxon>
        <taxon>Epsilonproteobacteria</taxon>
        <taxon>Campylobacterales</taxon>
        <taxon>Helicobacteraceae</taxon>
        <taxon>Helicobacter</taxon>
    </lineage>
</organism>
<sequence>MNTLGRFLRLTTFGESHGDMIGGVLDGMPSGIKIDYDLLENEMKRRQGGRNIFTTPRKEDDKVEITSGVFEGFSAGTPIGFLIHNQRARSKDYDNIKNLFRPSHADFTYFHKYGIRDFRGGGRSSARESAIRVAAGAFAKMLLREIGVVCESGIIKIGGIEAKNYDFNHALKSEIFALDKEQEEAQKTAIQNAIKNHDSIGGVALIRARGAKTNQKLPIGLGQGLYAKLDAKIAEAMMGLNGVKAVEIGKGVESSLLKGSEYNDLMSQKGFLSNHSGGVLGGMSNGEEIIVKVHFKPTPSIFQPQRTIDIKGNECECLLKGRHDPCIAIRGSVVCESLLSLVLADMVLLNLTSKIEYLKTIYNEN</sequence>